<evidence type="ECO:0000255" key="1">
    <source>
        <dbReference type="HAMAP-Rule" id="MF_00172"/>
    </source>
</evidence>
<feature type="chain" id="PRO_1000017272" description="5-methyltetrahydropteroyltriglutamate--homocysteine methyltransferase">
    <location>
        <begin position="1"/>
        <end position="753"/>
    </location>
</feature>
<feature type="active site" description="Proton donor" evidence="1">
    <location>
        <position position="694"/>
    </location>
</feature>
<feature type="binding site" evidence="1">
    <location>
        <begin position="17"/>
        <end position="20"/>
    </location>
    <ligand>
        <name>5-methyltetrahydropteroyltri-L-glutamate</name>
        <dbReference type="ChEBI" id="CHEBI:58207"/>
    </ligand>
</feature>
<feature type="binding site" evidence="1">
    <location>
        <position position="117"/>
    </location>
    <ligand>
        <name>5-methyltetrahydropteroyltri-L-glutamate</name>
        <dbReference type="ChEBI" id="CHEBI:58207"/>
    </ligand>
</feature>
<feature type="binding site" evidence="1">
    <location>
        <begin position="431"/>
        <end position="433"/>
    </location>
    <ligand>
        <name>L-homocysteine</name>
        <dbReference type="ChEBI" id="CHEBI:58199"/>
    </ligand>
</feature>
<feature type="binding site" evidence="1">
    <location>
        <begin position="431"/>
        <end position="433"/>
    </location>
    <ligand>
        <name>L-methionine</name>
        <dbReference type="ChEBI" id="CHEBI:57844"/>
    </ligand>
</feature>
<feature type="binding site" evidence="1">
    <location>
        <position position="484"/>
    </location>
    <ligand>
        <name>L-homocysteine</name>
        <dbReference type="ChEBI" id="CHEBI:58199"/>
    </ligand>
</feature>
<feature type="binding site" evidence="1">
    <location>
        <position position="484"/>
    </location>
    <ligand>
        <name>L-methionine</name>
        <dbReference type="ChEBI" id="CHEBI:57844"/>
    </ligand>
</feature>
<feature type="binding site" evidence="1">
    <location>
        <begin position="515"/>
        <end position="516"/>
    </location>
    <ligand>
        <name>5-methyltetrahydropteroyltri-L-glutamate</name>
        <dbReference type="ChEBI" id="CHEBI:58207"/>
    </ligand>
</feature>
<feature type="binding site" evidence="1">
    <location>
        <position position="561"/>
    </location>
    <ligand>
        <name>5-methyltetrahydropteroyltri-L-glutamate</name>
        <dbReference type="ChEBI" id="CHEBI:58207"/>
    </ligand>
</feature>
<feature type="binding site" evidence="1">
    <location>
        <position position="599"/>
    </location>
    <ligand>
        <name>L-homocysteine</name>
        <dbReference type="ChEBI" id="CHEBI:58199"/>
    </ligand>
</feature>
<feature type="binding site" evidence="1">
    <location>
        <position position="599"/>
    </location>
    <ligand>
        <name>L-methionine</name>
        <dbReference type="ChEBI" id="CHEBI:57844"/>
    </ligand>
</feature>
<feature type="binding site" evidence="1">
    <location>
        <position position="605"/>
    </location>
    <ligand>
        <name>5-methyltetrahydropteroyltri-L-glutamate</name>
        <dbReference type="ChEBI" id="CHEBI:58207"/>
    </ligand>
</feature>
<feature type="binding site" evidence="1">
    <location>
        <position position="641"/>
    </location>
    <ligand>
        <name>Zn(2+)</name>
        <dbReference type="ChEBI" id="CHEBI:29105"/>
        <note>catalytic</note>
    </ligand>
</feature>
<feature type="binding site" evidence="1">
    <location>
        <position position="643"/>
    </location>
    <ligand>
        <name>Zn(2+)</name>
        <dbReference type="ChEBI" id="CHEBI:29105"/>
        <note>catalytic</note>
    </ligand>
</feature>
<feature type="binding site" evidence="1">
    <location>
        <position position="665"/>
    </location>
    <ligand>
        <name>Zn(2+)</name>
        <dbReference type="ChEBI" id="CHEBI:29105"/>
        <note>catalytic</note>
    </ligand>
</feature>
<feature type="binding site" evidence="1">
    <location>
        <position position="726"/>
    </location>
    <ligand>
        <name>Zn(2+)</name>
        <dbReference type="ChEBI" id="CHEBI:29105"/>
        <note>catalytic</note>
    </ligand>
</feature>
<reference key="1">
    <citation type="journal article" date="2005" name="Nucleic Acids Res.">
        <title>Genome dynamics and diversity of Shigella species, the etiologic agents of bacillary dysentery.</title>
        <authorList>
            <person name="Yang F."/>
            <person name="Yang J."/>
            <person name="Zhang X."/>
            <person name="Chen L."/>
            <person name="Jiang Y."/>
            <person name="Yan Y."/>
            <person name="Tang X."/>
            <person name="Wang J."/>
            <person name="Xiong Z."/>
            <person name="Dong J."/>
            <person name="Xue Y."/>
            <person name="Zhu Y."/>
            <person name="Xu X."/>
            <person name="Sun L."/>
            <person name="Chen S."/>
            <person name="Nie H."/>
            <person name="Peng J."/>
            <person name="Xu J."/>
            <person name="Wang Y."/>
            <person name="Yuan Z."/>
            <person name="Wen Y."/>
            <person name="Yao Z."/>
            <person name="Shen Y."/>
            <person name="Qiang B."/>
            <person name="Hou Y."/>
            <person name="Yu J."/>
            <person name="Jin Q."/>
        </authorList>
    </citation>
    <scope>NUCLEOTIDE SEQUENCE [LARGE SCALE GENOMIC DNA]</scope>
    <source>
        <strain>Sb227</strain>
    </source>
</reference>
<organism>
    <name type="scientific">Shigella boydii serotype 4 (strain Sb227)</name>
    <dbReference type="NCBI Taxonomy" id="300268"/>
    <lineage>
        <taxon>Bacteria</taxon>
        <taxon>Pseudomonadati</taxon>
        <taxon>Pseudomonadota</taxon>
        <taxon>Gammaproteobacteria</taxon>
        <taxon>Enterobacterales</taxon>
        <taxon>Enterobacteriaceae</taxon>
        <taxon>Shigella</taxon>
    </lineage>
</organism>
<proteinExistence type="inferred from homology"/>
<sequence length="753" mass="84659">MTILNHTLGFPRVGLRRELKKAQESYWAGNSTREELLAVGRELRARHWDQQKQAGIDLLPVGDFAWYDHVLTTSLLLGNVPARHQNKDGSVDIDTLFRIGRGRAPTGEPAAAAEMTKWFNTNYHYMVPEFVKGQQFKLTWTQLLEEVDEALALGHNVKPVLLGPVTWLWLGKVKGEQFDRLSLLNDILPVYQQVLAELEKRGIEWVQIDEPALVLELPQAWLDAYKPAYDALQGQVKLLLTTYFEGVTPNLDTITALPVQGLHVDLVHGKDGVAELHKRLPSDWLLSAGLINGRNVWRADLTEKYAQIKDIVGKRDLWVASSCSLLHSPIDLSVETRLDAEVKSWFAFALQKCHELALLRDALNSGDTAALAEWSAPIQARRHSTRVHNPAVEKRLAAITAQDSQRANVYEVRAEAQRARFKLPAWPTTTIGSFPQTTEIRTLRLDFKKGNLDANNYRTGIAEHIKQAIVEQERLGLDVLVHGEAERNDMVEYFGEHLDGFVFTQNGWVQSYGSRCVKPPIVIGDVSRPAPITVEWAKYAQSLTDKPVKGMLTGPVTILCWSFPREDVSRETIAKQIALALRDEVADLEAAGIGIIQIDEPALREGLPLRRSDWDAYLQWGVEAFRINAAVAKDDTQIHTHMCYCEFNDIMDSIAALDADVITIETSRSDMELLESFEEFDYPNEIGPGVYDIHSPNVPSVEWIEALLKKAAKRIPAERLWVNPDCGLKTRGWPETRAALANMVQAAQNLRRG</sequence>
<protein>
    <recommendedName>
        <fullName evidence="1">5-methyltetrahydropteroyltriglutamate--homocysteine methyltransferase</fullName>
        <ecNumber evidence="1">2.1.1.14</ecNumber>
    </recommendedName>
    <alternativeName>
        <fullName evidence="1">Cobalamin-independent methionine synthase</fullName>
    </alternativeName>
    <alternativeName>
        <fullName evidence="1">Methionine synthase, vitamin-B12 independent isozyme</fullName>
    </alternativeName>
</protein>
<dbReference type="EC" id="2.1.1.14" evidence="1"/>
<dbReference type="EMBL" id="CP000036">
    <property type="protein sequence ID" value="ABB68299.1"/>
    <property type="molecule type" value="Genomic_DNA"/>
</dbReference>
<dbReference type="RefSeq" id="WP_000153927.1">
    <property type="nucleotide sequence ID" value="NC_007613.1"/>
</dbReference>
<dbReference type="SMR" id="Q31UF9"/>
<dbReference type="KEGG" id="sbo:SBO_3841"/>
<dbReference type="HOGENOM" id="CLU_013175_0_0_6"/>
<dbReference type="UniPathway" id="UPA00051">
    <property type="reaction ID" value="UER00082"/>
</dbReference>
<dbReference type="Proteomes" id="UP000007067">
    <property type="component" value="Chromosome"/>
</dbReference>
<dbReference type="GO" id="GO:0003871">
    <property type="term" value="F:5-methyltetrahydropteroyltriglutamate-homocysteine S-methyltransferase activity"/>
    <property type="evidence" value="ECO:0007669"/>
    <property type="project" value="UniProtKB-UniRule"/>
</dbReference>
<dbReference type="GO" id="GO:0008270">
    <property type="term" value="F:zinc ion binding"/>
    <property type="evidence" value="ECO:0007669"/>
    <property type="project" value="InterPro"/>
</dbReference>
<dbReference type="GO" id="GO:0009086">
    <property type="term" value="P:methionine biosynthetic process"/>
    <property type="evidence" value="ECO:0007669"/>
    <property type="project" value="UniProtKB-UniRule"/>
</dbReference>
<dbReference type="GO" id="GO:0032259">
    <property type="term" value="P:methylation"/>
    <property type="evidence" value="ECO:0007669"/>
    <property type="project" value="UniProtKB-KW"/>
</dbReference>
<dbReference type="CDD" id="cd03311">
    <property type="entry name" value="CIMS_C_terminal_like"/>
    <property type="match status" value="1"/>
</dbReference>
<dbReference type="CDD" id="cd03312">
    <property type="entry name" value="CIMS_N_terminal_like"/>
    <property type="match status" value="1"/>
</dbReference>
<dbReference type="FunFam" id="3.20.20.210:FF:000002">
    <property type="entry name" value="5-methyltetrahydropteroyltriglutamate--homocysteine methyltransferase"/>
    <property type="match status" value="1"/>
</dbReference>
<dbReference type="FunFam" id="3.20.20.210:FF:000003">
    <property type="entry name" value="5-methyltetrahydropteroyltriglutamate--homocysteine methyltransferase"/>
    <property type="match status" value="1"/>
</dbReference>
<dbReference type="Gene3D" id="3.20.20.210">
    <property type="match status" value="2"/>
</dbReference>
<dbReference type="HAMAP" id="MF_00172">
    <property type="entry name" value="Meth_synth"/>
    <property type="match status" value="1"/>
</dbReference>
<dbReference type="InterPro" id="IPR013215">
    <property type="entry name" value="Cbl-indep_Met_Synth_N"/>
</dbReference>
<dbReference type="InterPro" id="IPR006276">
    <property type="entry name" value="Cobalamin-indep_Met_synthase"/>
</dbReference>
<dbReference type="InterPro" id="IPR002629">
    <property type="entry name" value="Met_Synth_C/arc"/>
</dbReference>
<dbReference type="InterPro" id="IPR038071">
    <property type="entry name" value="UROD/MetE-like_sf"/>
</dbReference>
<dbReference type="NCBIfam" id="TIGR01371">
    <property type="entry name" value="met_syn_B12ind"/>
    <property type="match status" value="1"/>
</dbReference>
<dbReference type="NCBIfam" id="NF003556">
    <property type="entry name" value="PRK05222.1"/>
    <property type="match status" value="1"/>
</dbReference>
<dbReference type="PANTHER" id="PTHR30519">
    <property type="entry name" value="5-METHYLTETRAHYDROPTEROYLTRIGLUTAMATE--HOMOCYSTEINE METHYLTRANSFERASE"/>
    <property type="match status" value="1"/>
</dbReference>
<dbReference type="Pfam" id="PF08267">
    <property type="entry name" value="Meth_synt_1"/>
    <property type="match status" value="1"/>
</dbReference>
<dbReference type="Pfam" id="PF01717">
    <property type="entry name" value="Meth_synt_2"/>
    <property type="match status" value="1"/>
</dbReference>
<dbReference type="PIRSF" id="PIRSF000382">
    <property type="entry name" value="MeTrfase_B12_ind"/>
    <property type="match status" value="1"/>
</dbReference>
<dbReference type="SUPFAM" id="SSF51726">
    <property type="entry name" value="UROD/MetE-like"/>
    <property type="match status" value="2"/>
</dbReference>
<accession>Q31UF9</accession>
<keyword id="KW-0028">Amino-acid biosynthesis</keyword>
<keyword id="KW-0479">Metal-binding</keyword>
<keyword id="KW-0486">Methionine biosynthesis</keyword>
<keyword id="KW-0489">Methyltransferase</keyword>
<keyword id="KW-0677">Repeat</keyword>
<keyword id="KW-0808">Transferase</keyword>
<keyword id="KW-0862">Zinc</keyword>
<comment type="function">
    <text evidence="1">Catalyzes the transfer of a methyl group from 5-methyltetrahydrofolate to homocysteine resulting in methionine formation.</text>
</comment>
<comment type="catalytic activity">
    <reaction evidence="1">
        <text>5-methyltetrahydropteroyltri-L-glutamate + L-homocysteine = tetrahydropteroyltri-L-glutamate + L-methionine</text>
        <dbReference type="Rhea" id="RHEA:21196"/>
        <dbReference type="ChEBI" id="CHEBI:57844"/>
        <dbReference type="ChEBI" id="CHEBI:58140"/>
        <dbReference type="ChEBI" id="CHEBI:58199"/>
        <dbReference type="ChEBI" id="CHEBI:58207"/>
        <dbReference type="EC" id="2.1.1.14"/>
    </reaction>
</comment>
<comment type="cofactor">
    <cofactor evidence="1">
        <name>Zn(2+)</name>
        <dbReference type="ChEBI" id="CHEBI:29105"/>
    </cofactor>
    <text evidence="1">Binds 1 zinc ion per subunit.</text>
</comment>
<comment type="pathway">
    <text evidence="1">Amino-acid biosynthesis; L-methionine biosynthesis via de novo pathway; L-methionine from L-homocysteine (MetE route): step 1/1.</text>
</comment>
<comment type="similarity">
    <text evidence="1">Belongs to the vitamin-B12 independent methionine synthase family.</text>
</comment>
<name>METE_SHIBS</name>
<gene>
    <name evidence="1" type="primary">metE</name>
    <name type="ordered locus">SBO_3841</name>
</gene>